<organism>
    <name type="scientific">Macaca fascicularis</name>
    <name type="common">Crab-eating macaque</name>
    <name type="synonym">Cynomolgus monkey</name>
    <dbReference type="NCBI Taxonomy" id="9541"/>
    <lineage>
        <taxon>Eukaryota</taxon>
        <taxon>Metazoa</taxon>
        <taxon>Chordata</taxon>
        <taxon>Craniata</taxon>
        <taxon>Vertebrata</taxon>
        <taxon>Euteleostomi</taxon>
        <taxon>Mammalia</taxon>
        <taxon>Eutheria</taxon>
        <taxon>Euarchontoglires</taxon>
        <taxon>Primates</taxon>
        <taxon>Haplorrhini</taxon>
        <taxon>Catarrhini</taxon>
        <taxon>Cercopithecidae</taxon>
        <taxon>Cercopithecinae</taxon>
        <taxon>Macaca</taxon>
    </lineage>
</organism>
<protein>
    <recommendedName>
        <fullName evidence="3">Large ribosomal subunit protein uL1</fullName>
    </recommendedName>
    <alternativeName>
        <fullName>60S ribosomal protein L10a</fullName>
    </alternativeName>
</protein>
<comment type="function">
    <text evidence="2">Component of the large ribosomal subunit. The ribosome is a large ribonucleoprotein complex responsible for the synthesis of proteins in the cell.</text>
</comment>
<comment type="subunit">
    <text evidence="2">Component of the large ribosomal subunit.</text>
</comment>
<comment type="subcellular location">
    <subcellularLocation>
        <location evidence="2">Cytoplasm</location>
    </subcellularLocation>
</comment>
<comment type="similarity">
    <text evidence="3">Belongs to the universal ribosomal protein uL1 family.</text>
</comment>
<reference key="1">
    <citation type="submission" date="2005-06" db="EMBL/GenBank/DDBJ databases">
        <title>DNA sequences of macaque genes expressed in brain or testis and its evolutionary implications.</title>
        <authorList>
            <consortium name="International consortium for macaque cDNA sequencing and analysis"/>
        </authorList>
    </citation>
    <scope>NUCLEOTIDE SEQUENCE [LARGE SCALE MRNA]</scope>
    <source>
        <tissue>Brain cortex</tissue>
    </source>
</reference>
<gene>
    <name type="primary">RPL10A</name>
    <name type="ORF">QccE-11674</name>
</gene>
<keyword id="KW-0007">Acetylation</keyword>
<keyword id="KW-0963">Cytoplasm</keyword>
<keyword id="KW-1017">Isopeptide bond</keyword>
<keyword id="KW-0597">Phosphoprotein</keyword>
<keyword id="KW-1185">Reference proteome</keyword>
<keyword id="KW-0687">Ribonucleoprotein</keyword>
<keyword id="KW-0689">Ribosomal protein</keyword>
<keyword id="KW-0832">Ubl conjugation</keyword>
<name>RL10A_MACFA</name>
<feature type="initiator methionine" description="Removed" evidence="2">
    <location>
        <position position="1"/>
    </location>
</feature>
<feature type="chain" id="PRO_0000125819" description="Large ribosomal subunit protein uL1">
    <location>
        <begin position="2"/>
        <end position="217"/>
    </location>
</feature>
<feature type="modified residue" description="N-acetylserine" evidence="2">
    <location>
        <position position="2"/>
    </location>
</feature>
<feature type="modified residue" description="Phosphotyrosine" evidence="1">
    <location>
        <position position="11"/>
    </location>
</feature>
<feature type="modified residue" description="N6-acetyllysine" evidence="1">
    <location>
        <position position="91"/>
    </location>
</feature>
<feature type="modified residue" description="N6-acetyllysine" evidence="2">
    <location>
        <position position="106"/>
    </location>
</feature>
<feature type="modified residue" description="N6-acetyllysine; alternate" evidence="2">
    <location>
        <position position="118"/>
    </location>
</feature>
<feature type="cross-link" description="Glycyl lysine isopeptide (Lys-Gly) (interchain with G-Cter in SUMO1); alternate" evidence="2">
    <location>
        <position position="118"/>
    </location>
</feature>
<feature type="cross-link" description="Glycyl lysine isopeptide (Lys-Gly) (interchain with G-Cter in SUMO2); alternate" evidence="2">
    <location>
        <position position="118"/>
    </location>
</feature>
<dbReference type="EMBL" id="AB169500">
    <property type="protein sequence ID" value="BAE01582.1"/>
    <property type="molecule type" value="mRNA"/>
</dbReference>
<dbReference type="RefSeq" id="NP_001270977.1">
    <property type="nucleotide sequence ID" value="NM_001284048.1"/>
</dbReference>
<dbReference type="SMR" id="Q4R5P3"/>
<dbReference type="STRING" id="9541.ENSMFAP00000007108"/>
<dbReference type="eggNOG" id="KOG1570">
    <property type="taxonomic scope" value="Eukaryota"/>
</dbReference>
<dbReference type="Proteomes" id="UP000233100">
    <property type="component" value="Unplaced"/>
</dbReference>
<dbReference type="GO" id="GO:0005737">
    <property type="term" value="C:cytoplasm"/>
    <property type="evidence" value="ECO:0007669"/>
    <property type="project" value="UniProtKB-SubCell"/>
</dbReference>
<dbReference type="GO" id="GO:0015934">
    <property type="term" value="C:large ribosomal subunit"/>
    <property type="evidence" value="ECO:0007669"/>
    <property type="project" value="InterPro"/>
</dbReference>
<dbReference type="GO" id="GO:0003723">
    <property type="term" value="F:RNA binding"/>
    <property type="evidence" value="ECO:0007669"/>
    <property type="project" value="InterPro"/>
</dbReference>
<dbReference type="GO" id="GO:0003735">
    <property type="term" value="F:structural constituent of ribosome"/>
    <property type="evidence" value="ECO:0007669"/>
    <property type="project" value="InterPro"/>
</dbReference>
<dbReference type="GO" id="GO:0006412">
    <property type="term" value="P:translation"/>
    <property type="evidence" value="ECO:0007669"/>
    <property type="project" value="InterPro"/>
</dbReference>
<dbReference type="CDD" id="cd00403">
    <property type="entry name" value="Ribosomal_L1"/>
    <property type="match status" value="1"/>
</dbReference>
<dbReference type="FunFam" id="3.30.190.20:FF:000006">
    <property type="entry name" value="Ribosomal protein"/>
    <property type="match status" value="1"/>
</dbReference>
<dbReference type="FunFam" id="3.40.50.790:FF:000002">
    <property type="entry name" value="Ribosomal protein"/>
    <property type="match status" value="1"/>
</dbReference>
<dbReference type="FunFam" id="3.30.190.20:FF:000009">
    <property type="entry name" value="Ribosomal protein L10a"/>
    <property type="match status" value="1"/>
</dbReference>
<dbReference type="Gene3D" id="3.30.190.20">
    <property type="match status" value="1"/>
</dbReference>
<dbReference type="Gene3D" id="3.40.50.790">
    <property type="match status" value="1"/>
</dbReference>
<dbReference type="InterPro" id="IPR050257">
    <property type="entry name" value="eL8/uL1-like"/>
</dbReference>
<dbReference type="InterPro" id="IPR002143">
    <property type="entry name" value="Ribosomal_uL1"/>
</dbReference>
<dbReference type="InterPro" id="IPR023674">
    <property type="entry name" value="Ribosomal_uL1-like"/>
</dbReference>
<dbReference type="InterPro" id="IPR028364">
    <property type="entry name" value="Ribosomal_uL1/biogenesis"/>
</dbReference>
<dbReference type="InterPro" id="IPR016095">
    <property type="entry name" value="Ribosomal_uL1_3-a/b-sand"/>
</dbReference>
<dbReference type="InterPro" id="IPR023673">
    <property type="entry name" value="Ribosomal_uL1_CS"/>
</dbReference>
<dbReference type="PANTHER" id="PTHR23105">
    <property type="entry name" value="RIBOSOMAL PROTEIN L7AE FAMILY MEMBER"/>
    <property type="match status" value="1"/>
</dbReference>
<dbReference type="Pfam" id="PF00687">
    <property type="entry name" value="Ribosomal_L1"/>
    <property type="match status" value="1"/>
</dbReference>
<dbReference type="PIRSF" id="PIRSF002155">
    <property type="entry name" value="Ribosomal_L1"/>
    <property type="match status" value="1"/>
</dbReference>
<dbReference type="SUPFAM" id="SSF56808">
    <property type="entry name" value="Ribosomal protein L1"/>
    <property type="match status" value="1"/>
</dbReference>
<dbReference type="PROSITE" id="PS01199">
    <property type="entry name" value="RIBOSOMAL_L1"/>
    <property type="match status" value="1"/>
</dbReference>
<accession>Q4R5P3</accession>
<evidence type="ECO:0000250" key="1">
    <source>
        <dbReference type="UniProtKB" id="P53026"/>
    </source>
</evidence>
<evidence type="ECO:0000250" key="2">
    <source>
        <dbReference type="UniProtKB" id="P62906"/>
    </source>
</evidence>
<evidence type="ECO:0000305" key="3"/>
<proteinExistence type="evidence at transcript level"/>
<sequence length="217" mass="24843">MSSKVSRDTLYEAVREVLHGNQRKRRKFLETVELQISLKNYDPQKDKRFSGTVRLKSTPRPKFSVCVLGDQQHCDEAKAVDIPHMDIEALKKLNKNKKLVKKLAKKYDAFLASESLIKQIPRILGPGLNKAGKFPSPLTHNENMVAKVDEVKSTIKFQMKRVLCLAVAVGHVKMTDDELVYNIHLAVNFLVSLLKKNWQNVRALYIKSTMGKPQRLY</sequence>